<organism>
    <name type="scientific">Bartonella tribocorum (strain CIP 105476 / IBS 506)</name>
    <dbReference type="NCBI Taxonomy" id="382640"/>
    <lineage>
        <taxon>Bacteria</taxon>
        <taxon>Pseudomonadati</taxon>
        <taxon>Pseudomonadota</taxon>
        <taxon>Alphaproteobacteria</taxon>
        <taxon>Hyphomicrobiales</taxon>
        <taxon>Bartonellaceae</taxon>
        <taxon>Bartonella</taxon>
    </lineage>
</organism>
<gene>
    <name evidence="1" type="primary">nhaA</name>
    <name type="ordered locus">BT_0615</name>
</gene>
<name>NHAA_BART1</name>
<reference key="1">
    <citation type="journal article" date="2007" name="Nat. Genet.">
        <title>Genomic analysis of Bartonella identifies type IV secretion systems as host adaptability factors.</title>
        <authorList>
            <person name="Saenz H.L."/>
            <person name="Engel P."/>
            <person name="Stoeckli M.C."/>
            <person name="Lanz C."/>
            <person name="Raddatz G."/>
            <person name="Vayssier-Taussat M."/>
            <person name="Birtles R."/>
            <person name="Schuster S.C."/>
            <person name="Dehio C."/>
        </authorList>
    </citation>
    <scope>NUCLEOTIDE SEQUENCE [LARGE SCALE GENOMIC DNA]</scope>
    <source>
        <strain>CIP 105476 / IBS 506</strain>
    </source>
</reference>
<protein>
    <recommendedName>
        <fullName evidence="1">Na(+)/H(+) antiporter NhaA</fullName>
    </recommendedName>
    <alternativeName>
        <fullName evidence="1">Sodium/proton antiporter NhaA</fullName>
    </alternativeName>
</protein>
<accession>A9IQG4</accession>
<proteinExistence type="inferred from homology"/>
<comment type="function">
    <text evidence="1">Na(+)/H(+) antiporter that extrudes sodium in exchange for external protons.</text>
</comment>
<comment type="catalytic activity">
    <reaction evidence="1">
        <text>Na(+)(in) + 2 H(+)(out) = Na(+)(out) + 2 H(+)(in)</text>
        <dbReference type="Rhea" id="RHEA:29251"/>
        <dbReference type="ChEBI" id="CHEBI:15378"/>
        <dbReference type="ChEBI" id="CHEBI:29101"/>
    </reaction>
    <physiologicalReaction direction="left-to-right" evidence="1">
        <dbReference type="Rhea" id="RHEA:29252"/>
    </physiologicalReaction>
</comment>
<comment type="subcellular location">
    <subcellularLocation>
        <location evidence="1">Cell inner membrane</location>
        <topology evidence="1">Multi-pass membrane protein</topology>
    </subcellularLocation>
</comment>
<comment type="similarity">
    <text evidence="1">Belongs to the NhaA Na(+)/H(+) (TC 2.A.33) antiporter family.</text>
</comment>
<evidence type="ECO:0000255" key="1">
    <source>
        <dbReference type="HAMAP-Rule" id="MF_01844"/>
    </source>
</evidence>
<dbReference type="EMBL" id="AM260525">
    <property type="protein sequence ID" value="CAK01054.1"/>
    <property type="molecule type" value="Genomic_DNA"/>
</dbReference>
<dbReference type="RefSeq" id="WP_012231157.1">
    <property type="nucleotide sequence ID" value="NC_010161.1"/>
</dbReference>
<dbReference type="SMR" id="A9IQG4"/>
<dbReference type="KEGG" id="btr:BT_0615"/>
<dbReference type="eggNOG" id="COG3004">
    <property type="taxonomic scope" value="Bacteria"/>
</dbReference>
<dbReference type="HOGENOM" id="CLU_015803_1_2_5"/>
<dbReference type="Proteomes" id="UP000001592">
    <property type="component" value="Chromosome"/>
</dbReference>
<dbReference type="GO" id="GO:0005886">
    <property type="term" value="C:plasma membrane"/>
    <property type="evidence" value="ECO:0007669"/>
    <property type="project" value="UniProtKB-SubCell"/>
</dbReference>
<dbReference type="GO" id="GO:0015385">
    <property type="term" value="F:sodium:proton antiporter activity"/>
    <property type="evidence" value="ECO:0007669"/>
    <property type="project" value="TreeGrafter"/>
</dbReference>
<dbReference type="GO" id="GO:0006885">
    <property type="term" value="P:regulation of pH"/>
    <property type="evidence" value="ECO:0007669"/>
    <property type="project" value="InterPro"/>
</dbReference>
<dbReference type="Gene3D" id="1.20.1530.10">
    <property type="entry name" value="Na+/H+ antiporter like domain"/>
    <property type="match status" value="1"/>
</dbReference>
<dbReference type="HAMAP" id="MF_01844">
    <property type="entry name" value="NhaA"/>
    <property type="match status" value="1"/>
</dbReference>
<dbReference type="InterPro" id="IPR023171">
    <property type="entry name" value="Na/H_antiporter_dom_sf"/>
</dbReference>
<dbReference type="InterPro" id="IPR004670">
    <property type="entry name" value="NhaA"/>
</dbReference>
<dbReference type="NCBIfam" id="TIGR00773">
    <property type="entry name" value="NhaA"/>
    <property type="match status" value="1"/>
</dbReference>
<dbReference type="PANTHER" id="PTHR30341:SF0">
    <property type="entry name" value="NA(+)_H(+) ANTIPORTER NHAA"/>
    <property type="match status" value="1"/>
</dbReference>
<dbReference type="PANTHER" id="PTHR30341">
    <property type="entry name" value="SODIUM ION/PROTON ANTIPORTER NHAA-RELATED"/>
    <property type="match status" value="1"/>
</dbReference>
<dbReference type="Pfam" id="PF06965">
    <property type="entry name" value="Na_H_antiport_1"/>
    <property type="match status" value="1"/>
</dbReference>
<sequence length="453" mass="48975">MSDLSSNRLPNRASRVTNQALSAIERFLHIEALSGIVLLLAAASALIFANSQYAALYESFWHTPLGFNLGHFTLSWDLHFWVNDALMTIFFLVAGMEIRREIHEGALADFKQAILPIVAAIGGVCVPAIIYFIFNFNEGHIHGWAVPTATDIAFALGILALLGKKIPSNLHIILLSLAIIDDIIAVLIIAFFYSTNIDPSGLLIAGGGIALVLFFQWIGLASAWLYILPGAIIWWGLMVTGVHPSLAGVILGMMTPVFPTRTLVAPLTMLSNAMQILQEKNTKTDLHHISTALKKMRKGQRAMIAPVTRIQKALHPWVAYGIMPVFAFANAGVSFANFDLSSGKSFLIVFGVVIGLFVGKPLGIITASYLAVKSGLCRLPPQMTWAGILLIGFLAGIGFTMSIFVSMLAFKDIILLDAAKIGVLCGSGLSALIGLGYGFIYIKRNKDIPHSSE</sequence>
<keyword id="KW-0050">Antiport</keyword>
<keyword id="KW-0997">Cell inner membrane</keyword>
<keyword id="KW-1003">Cell membrane</keyword>
<keyword id="KW-0406">Ion transport</keyword>
<keyword id="KW-0472">Membrane</keyword>
<keyword id="KW-0915">Sodium</keyword>
<keyword id="KW-0739">Sodium transport</keyword>
<keyword id="KW-0812">Transmembrane</keyword>
<keyword id="KW-1133">Transmembrane helix</keyword>
<keyword id="KW-0813">Transport</keyword>
<feature type="chain" id="PRO_0000334238" description="Na(+)/H(+) antiporter NhaA">
    <location>
        <begin position="1"/>
        <end position="453"/>
    </location>
</feature>
<feature type="transmembrane region" description="Helical" evidence="1">
    <location>
        <begin position="27"/>
        <end position="47"/>
    </location>
</feature>
<feature type="transmembrane region" description="Helical" evidence="1">
    <location>
        <begin position="78"/>
        <end position="98"/>
    </location>
</feature>
<feature type="transmembrane region" description="Helical" evidence="1">
    <location>
        <begin position="114"/>
        <end position="134"/>
    </location>
</feature>
<feature type="transmembrane region" description="Helical" evidence="1">
    <location>
        <begin position="143"/>
        <end position="163"/>
    </location>
</feature>
<feature type="transmembrane region" description="Helical" evidence="1">
    <location>
        <begin position="172"/>
        <end position="192"/>
    </location>
</feature>
<feature type="transmembrane region" description="Helical" evidence="1">
    <location>
        <begin position="201"/>
        <end position="221"/>
    </location>
</feature>
<feature type="transmembrane region" description="Helical" evidence="1">
    <location>
        <begin position="222"/>
        <end position="242"/>
    </location>
</feature>
<feature type="transmembrane region" description="Helical" evidence="1">
    <location>
        <begin position="316"/>
        <end position="336"/>
    </location>
</feature>
<feature type="transmembrane region" description="Helical" evidence="1">
    <location>
        <begin position="346"/>
        <end position="366"/>
    </location>
</feature>
<feature type="transmembrane region" description="Helical" evidence="1">
    <location>
        <begin position="385"/>
        <end position="405"/>
    </location>
</feature>
<feature type="transmembrane region" description="Helical" evidence="1">
    <location>
        <begin position="421"/>
        <end position="441"/>
    </location>
</feature>